<comment type="function">
    <text evidence="1">Transfers a palmitate residue from the sn-1 position of a phospholipid to the N-linked hydroxymyristate on the proximal unit of lipid A or its precursors.</text>
</comment>
<comment type="catalytic activity">
    <reaction evidence="1">
        <text>lipid A (E. coli) + a 1-hexadecanoyl-2-acyl-sn-glycero-3-phosphocholine = hepta-acyl lipid A (E. coli) + a 2-acyl-sn-glycero-3-phosphocholine</text>
        <dbReference type="Rhea" id="RHEA:46864"/>
        <dbReference type="ChEBI" id="CHEBI:57875"/>
        <dbReference type="ChEBI" id="CHEBI:77369"/>
        <dbReference type="ChEBI" id="CHEBI:87048"/>
        <dbReference type="ChEBI" id="CHEBI:134257"/>
        <dbReference type="EC" id="2.3.1.251"/>
    </reaction>
</comment>
<comment type="catalytic activity">
    <reaction evidence="1">
        <text>lipid IIA + a 1-hexadecanoyl-2-acyl-sn-glycero-3-phosphocholine = lipid IIB + a 2-acyl-sn-glycero-3-phosphocholine</text>
        <dbReference type="Rhea" id="RHEA:46872"/>
        <dbReference type="ChEBI" id="CHEBI:57875"/>
        <dbReference type="ChEBI" id="CHEBI:77369"/>
        <dbReference type="ChEBI" id="CHEBI:86226"/>
        <dbReference type="ChEBI" id="CHEBI:87058"/>
        <dbReference type="EC" id="2.3.1.251"/>
    </reaction>
</comment>
<comment type="catalytic activity">
    <reaction evidence="1">
        <text>lipid IVA (E. coli) + a 1-hexadecanoyl-2-acyl-sn-glycero-3-phosphocholine = lipid IVB (E. coli) + a 2-acyl-sn-glycero-3-phosphocholine</text>
        <dbReference type="Rhea" id="RHEA:46868"/>
        <dbReference type="ChEBI" id="CHEBI:57875"/>
        <dbReference type="ChEBI" id="CHEBI:58603"/>
        <dbReference type="ChEBI" id="CHEBI:77369"/>
        <dbReference type="ChEBI" id="CHEBI:87049"/>
        <dbReference type="EC" id="2.3.1.251"/>
    </reaction>
</comment>
<comment type="subunit">
    <text evidence="1">Homodimer.</text>
</comment>
<comment type="subcellular location">
    <subcellularLocation>
        <location evidence="1">Cell outer membrane</location>
    </subcellularLocation>
</comment>
<comment type="similarity">
    <text evidence="1">Belongs to the lipid A palmitoyltransferase family.</text>
</comment>
<name>PAGP_ECOL5</name>
<protein>
    <recommendedName>
        <fullName evidence="1">Lipid A palmitoyltransferase PagP</fullName>
        <ecNumber evidence="1">2.3.1.251</ecNumber>
    </recommendedName>
    <alternativeName>
        <fullName evidence="1">Lipid A acylation protein</fullName>
    </alternativeName>
</protein>
<proteinExistence type="inferred from homology"/>
<reference key="1">
    <citation type="journal article" date="2006" name="Mol. Microbiol.">
        <title>Role of pathogenicity island-associated integrases in the genome plasticity of uropathogenic Escherichia coli strain 536.</title>
        <authorList>
            <person name="Hochhut B."/>
            <person name="Wilde C."/>
            <person name="Balling G."/>
            <person name="Middendorf B."/>
            <person name="Dobrindt U."/>
            <person name="Brzuszkiewicz E."/>
            <person name="Gottschalk G."/>
            <person name="Carniel E."/>
            <person name="Hacker J."/>
        </authorList>
    </citation>
    <scope>NUCLEOTIDE SEQUENCE [LARGE SCALE GENOMIC DNA]</scope>
    <source>
        <strain>536 / UPEC</strain>
    </source>
</reference>
<dbReference type="EC" id="2.3.1.251" evidence="1"/>
<dbReference type="EMBL" id="CP000247">
    <property type="protein sequence ID" value="ABG68681.1"/>
    <property type="molecule type" value="Genomic_DNA"/>
</dbReference>
<dbReference type="RefSeq" id="WP_000868776.1">
    <property type="nucleotide sequence ID" value="NC_008253.1"/>
</dbReference>
<dbReference type="SMR" id="Q0TK50"/>
<dbReference type="KEGG" id="ecp:ECP_0653"/>
<dbReference type="HOGENOM" id="CLU_104099_0_0_6"/>
<dbReference type="Proteomes" id="UP000009182">
    <property type="component" value="Chromosome"/>
</dbReference>
<dbReference type="GO" id="GO:0009279">
    <property type="term" value="C:cell outer membrane"/>
    <property type="evidence" value="ECO:0007669"/>
    <property type="project" value="UniProtKB-SubCell"/>
</dbReference>
<dbReference type="GO" id="GO:0016416">
    <property type="term" value="F:O-palmitoyltransferase activity"/>
    <property type="evidence" value="ECO:0007669"/>
    <property type="project" value="UniProtKB-UniRule"/>
</dbReference>
<dbReference type="GO" id="GO:0009245">
    <property type="term" value="P:lipid A biosynthetic process"/>
    <property type="evidence" value="ECO:0007669"/>
    <property type="project" value="UniProtKB-UniRule"/>
</dbReference>
<dbReference type="FunFam" id="2.40.160.20:FF:000002">
    <property type="entry name" value="Lipid A palmitoyltransferase PagP"/>
    <property type="match status" value="1"/>
</dbReference>
<dbReference type="Gene3D" id="2.40.160.20">
    <property type="match status" value="1"/>
</dbReference>
<dbReference type="HAMAP" id="MF_00837">
    <property type="entry name" value="PagP_transferase"/>
    <property type="match status" value="1"/>
</dbReference>
<dbReference type="InterPro" id="IPR009746">
    <property type="entry name" value="LipidA_acyl_PagP"/>
</dbReference>
<dbReference type="InterPro" id="IPR011250">
    <property type="entry name" value="OMP/PagP_b-brl"/>
</dbReference>
<dbReference type="NCBIfam" id="NF008271">
    <property type="entry name" value="PRK11045.1"/>
    <property type="match status" value="1"/>
</dbReference>
<dbReference type="Pfam" id="PF07017">
    <property type="entry name" value="PagP"/>
    <property type="match status" value="1"/>
</dbReference>
<dbReference type="SUPFAM" id="SSF56925">
    <property type="entry name" value="OMPA-like"/>
    <property type="match status" value="1"/>
</dbReference>
<sequence length="186" mass="21831">MKVSKYVAIFFFVFIQLISVGKVFANADEWMTTFRENIAQTWQQPEHYDLYIPAITWHARFAYDKEKTDRYNERPWGGGFGQSRWDEKGNWHGLYAMAFKDSWNKWEPIAGYGWESTWRPLADENFHLGLGFTAGVTARDNWNYIPLPVLLPLASVGYGPATFQMTYIPGTYNNGNVYFAWMRFQF</sequence>
<feature type="signal peptide" evidence="1">
    <location>
        <begin position="1"/>
        <end position="25"/>
    </location>
</feature>
<feature type="chain" id="PRO_0000414454" description="Lipid A palmitoyltransferase PagP">
    <location>
        <begin position="26"/>
        <end position="186"/>
    </location>
</feature>
<feature type="active site" evidence="1">
    <location>
        <position position="58"/>
    </location>
</feature>
<feature type="active site" evidence="1">
    <location>
        <position position="101"/>
    </location>
</feature>
<feature type="active site" evidence="1">
    <location>
        <position position="102"/>
    </location>
</feature>
<feature type="site" description="Role in lipopolysaccharide recognition" evidence="1">
    <location>
        <position position="67"/>
    </location>
</feature>
<feature type="site" description="Role in the phospholipid gating" evidence="1">
    <location>
        <position position="172"/>
    </location>
</feature>
<evidence type="ECO:0000255" key="1">
    <source>
        <dbReference type="HAMAP-Rule" id="MF_00837"/>
    </source>
</evidence>
<accession>Q0TK50</accession>
<keyword id="KW-0012">Acyltransferase</keyword>
<keyword id="KW-0998">Cell outer membrane</keyword>
<keyword id="KW-0472">Membrane</keyword>
<keyword id="KW-0732">Signal</keyword>
<keyword id="KW-0808">Transferase</keyword>
<organism>
    <name type="scientific">Escherichia coli O6:K15:H31 (strain 536 / UPEC)</name>
    <dbReference type="NCBI Taxonomy" id="362663"/>
    <lineage>
        <taxon>Bacteria</taxon>
        <taxon>Pseudomonadati</taxon>
        <taxon>Pseudomonadota</taxon>
        <taxon>Gammaproteobacteria</taxon>
        <taxon>Enterobacterales</taxon>
        <taxon>Enterobacteriaceae</taxon>
        <taxon>Escherichia</taxon>
    </lineage>
</organism>
<gene>
    <name evidence="1" type="primary">pagP</name>
    <name type="ordered locus">ECP_0653</name>
</gene>